<protein>
    <recommendedName>
        <fullName evidence="1">Fatty acid oxidation complex subunit alpha</fullName>
    </recommendedName>
    <domain>
        <recommendedName>
            <fullName evidence="1">Enoyl-CoA hydratase/3-hydroxybutyryl-CoA epimerase</fullName>
            <ecNumber evidence="1">4.2.1.17</ecNumber>
            <ecNumber evidence="1">5.1.2.3</ecNumber>
        </recommendedName>
    </domain>
    <domain>
        <recommendedName>
            <fullName evidence="1">3-hydroxyacyl-CoA dehydrogenase</fullName>
            <ecNumber evidence="1">1.1.1.35</ecNumber>
        </recommendedName>
    </domain>
</protein>
<gene>
    <name evidence="1" type="primary">fadJ</name>
    <name type="ordered locus">c2886</name>
</gene>
<dbReference type="EC" id="4.2.1.17" evidence="1"/>
<dbReference type="EC" id="5.1.2.3" evidence="1"/>
<dbReference type="EC" id="1.1.1.35" evidence="1"/>
<dbReference type="EMBL" id="AJ586889">
    <property type="protein sequence ID" value="CAE55846.1"/>
    <property type="molecule type" value="Genomic_DNA"/>
</dbReference>
<dbReference type="EMBL" id="AE014075">
    <property type="protein sequence ID" value="AAN81336.1"/>
    <property type="molecule type" value="Genomic_DNA"/>
</dbReference>
<dbReference type="RefSeq" id="WP_000425032.1">
    <property type="nucleotide sequence ID" value="NZ_CP051263.1"/>
</dbReference>
<dbReference type="SMR" id="Q8FFG4"/>
<dbReference type="STRING" id="199310.c2886"/>
<dbReference type="KEGG" id="ecc:c2886"/>
<dbReference type="eggNOG" id="COG1024">
    <property type="taxonomic scope" value="Bacteria"/>
</dbReference>
<dbReference type="eggNOG" id="COG1250">
    <property type="taxonomic scope" value="Bacteria"/>
</dbReference>
<dbReference type="HOGENOM" id="CLU_009834_16_1_6"/>
<dbReference type="BioCyc" id="ECOL199310:C2886-MONOMER"/>
<dbReference type="UniPathway" id="UPA00659"/>
<dbReference type="Proteomes" id="UP000001410">
    <property type="component" value="Chromosome"/>
</dbReference>
<dbReference type="GO" id="GO:0005737">
    <property type="term" value="C:cytoplasm"/>
    <property type="evidence" value="ECO:0007669"/>
    <property type="project" value="UniProtKB-SubCell"/>
</dbReference>
<dbReference type="GO" id="GO:0008692">
    <property type="term" value="F:3-hydroxybutyryl-CoA epimerase activity"/>
    <property type="evidence" value="ECO:0007669"/>
    <property type="project" value="UniProtKB-UniRule"/>
</dbReference>
<dbReference type="GO" id="GO:0004300">
    <property type="term" value="F:enoyl-CoA hydratase activity"/>
    <property type="evidence" value="ECO:0007669"/>
    <property type="project" value="UniProtKB-UniRule"/>
</dbReference>
<dbReference type="GO" id="GO:0016509">
    <property type="term" value="F:long-chain-3-hydroxyacyl-CoA dehydrogenase activity"/>
    <property type="evidence" value="ECO:0007669"/>
    <property type="project" value="TreeGrafter"/>
</dbReference>
<dbReference type="GO" id="GO:0070403">
    <property type="term" value="F:NAD+ binding"/>
    <property type="evidence" value="ECO:0007669"/>
    <property type="project" value="InterPro"/>
</dbReference>
<dbReference type="GO" id="GO:0006635">
    <property type="term" value="P:fatty acid beta-oxidation"/>
    <property type="evidence" value="ECO:0007669"/>
    <property type="project" value="UniProtKB-UniRule"/>
</dbReference>
<dbReference type="CDD" id="cd06558">
    <property type="entry name" value="crotonase-like"/>
    <property type="match status" value="1"/>
</dbReference>
<dbReference type="FunFam" id="1.10.1040.50:FF:000003">
    <property type="entry name" value="Fatty acid oxidation complex subunit alpha"/>
    <property type="match status" value="1"/>
</dbReference>
<dbReference type="FunFam" id="3.90.226.10:FF:000011">
    <property type="entry name" value="Fatty acid oxidation complex subunit alpha"/>
    <property type="match status" value="1"/>
</dbReference>
<dbReference type="FunFam" id="3.40.50.720:FF:000009">
    <property type="entry name" value="Fatty oxidation complex, alpha subunit"/>
    <property type="match status" value="1"/>
</dbReference>
<dbReference type="Gene3D" id="1.10.1040.50">
    <property type="match status" value="1"/>
</dbReference>
<dbReference type="Gene3D" id="3.90.226.10">
    <property type="entry name" value="2-enoyl-CoA Hydratase, Chain A, domain 1"/>
    <property type="match status" value="1"/>
</dbReference>
<dbReference type="Gene3D" id="3.40.50.720">
    <property type="entry name" value="NAD(P)-binding Rossmann-like Domain"/>
    <property type="match status" value="1"/>
</dbReference>
<dbReference type="HAMAP" id="MF_01617">
    <property type="entry name" value="FadJ"/>
    <property type="match status" value="1"/>
</dbReference>
<dbReference type="InterPro" id="IPR006180">
    <property type="entry name" value="3-OHacyl-CoA_DH_CS"/>
</dbReference>
<dbReference type="InterPro" id="IPR006176">
    <property type="entry name" value="3-OHacyl-CoA_DH_NAD-bd"/>
</dbReference>
<dbReference type="InterPro" id="IPR006108">
    <property type="entry name" value="3HC_DH_C"/>
</dbReference>
<dbReference type="InterPro" id="IPR008927">
    <property type="entry name" value="6-PGluconate_DH-like_C_sf"/>
</dbReference>
<dbReference type="InterPro" id="IPR029045">
    <property type="entry name" value="ClpP/crotonase-like_dom_sf"/>
</dbReference>
<dbReference type="InterPro" id="IPR001753">
    <property type="entry name" value="Enoyl-CoA_hydra/iso"/>
</dbReference>
<dbReference type="InterPro" id="IPR050136">
    <property type="entry name" value="FA_oxidation_alpha_subunit"/>
</dbReference>
<dbReference type="InterPro" id="IPR012802">
    <property type="entry name" value="FadJ"/>
</dbReference>
<dbReference type="InterPro" id="IPR036291">
    <property type="entry name" value="NAD(P)-bd_dom_sf"/>
</dbReference>
<dbReference type="NCBIfam" id="TIGR02440">
    <property type="entry name" value="FadJ"/>
    <property type="match status" value="1"/>
</dbReference>
<dbReference type="NCBIfam" id="NF008363">
    <property type="entry name" value="PRK11154.1"/>
    <property type="match status" value="1"/>
</dbReference>
<dbReference type="PANTHER" id="PTHR43612">
    <property type="entry name" value="TRIFUNCTIONAL ENZYME SUBUNIT ALPHA"/>
    <property type="match status" value="1"/>
</dbReference>
<dbReference type="PANTHER" id="PTHR43612:SF3">
    <property type="entry name" value="TRIFUNCTIONAL ENZYME SUBUNIT ALPHA, MITOCHONDRIAL"/>
    <property type="match status" value="1"/>
</dbReference>
<dbReference type="Pfam" id="PF00725">
    <property type="entry name" value="3HCDH"/>
    <property type="match status" value="2"/>
</dbReference>
<dbReference type="Pfam" id="PF02737">
    <property type="entry name" value="3HCDH_N"/>
    <property type="match status" value="1"/>
</dbReference>
<dbReference type="Pfam" id="PF00378">
    <property type="entry name" value="ECH_1"/>
    <property type="match status" value="1"/>
</dbReference>
<dbReference type="SUPFAM" id="SSF48179">
    <property type="entry name" value="6-phosphogluconate dehydrogenase C-terminal domain-like"/>
    <property type="match status" value="2"/>
</dbReference>
<dbReference type="SUPFAM" id="SSF52096">
    <property type="entry name" value="ClpP/crotonase"/>
    <property type="match status" value="1"/>
</dbReference>
<dbReference type="SUPFAM" id="SSF51735">
    <property type="entry name" value="NAD(P)-binding Rossmann-fold domains"/>
    <property type="match status" value="1"/>
</dbReference>
<dbReference type="PROSITE" id="PS00067">
    <property type="entry name" value="3HCDH"/>
    <property type="match status" value="1"/>
</dbReference>
<sequence>MEMASAFTLNVRLDNIAVITIDVPGEKMNTLKAEFASQVRAIIKQLRENKDLRGVVFISAKPDNFIAGADINMIANCKTAQEAEALARQGQQLMAEIHALPVPVIAAIHGACLGGGLELALACHGRVCTDDPKTVLGLPEVQLGLLPGSGGTQRLPRLIGVSTALEMILTGKQLRAKQALKLGLVDDVVPHSILLEAAVELAKQDRPSSRPLPVRERILAGPLGRALLFKMVGKKTEQKTQGNYPATKRILDVIETGLAQGTSSGYDAEARAFGELAMTPQSQALRNIFFASTEVKKDPGSDAPPAPLNSVGILGGGLMGGGIAYVTACKAGLPVRIKDINPQGINHALKYSWDQLEGKVRRRHLKASERDKQLALISGTTDYRGFAHRDLIIEAVFENLELKQQMVAEVEQNCAAHTIFASNTSSLPIADIAAHAARPEQVIGLHFFSPVEKMPLVEIIPHAGTSAQTIATTVKLAKKQGKTPIVVRDKAGFYVNRILAPYINEAIRMLTEGERVEHIDAALVKFGFPVGPIQLLDEVGIDTGTKIIPVLEAAYGERFSAPANVVSSILNDDRKGRKNGRGFYLYGQKGRKSKKQVDPAIYPLIGAQGQGRLSAPQVAERCVMLMLNEAVRCLDEQVIRSVRDGDIGAVFGIGFPPFLGGPFRYIDSLGAGEVVAIMQRLATQYGSRFTPCERLVEMSKRGESFWKTTATDLQ</sequence>
<accession>Q8FFG4</accession>
<comment type="function">
    <text evidence="1">Catalyzes the formation of a hydroxyacyl-CoA by addition of water on enoyl-CoA. Also exhibits 3-hydroxyacyl-CoA epimerase and 3-hydroxyacyl-CoA dehydrogenase activities.</text>
</comment>
<comment type="catalytic activity">
    <reaction evidence="1">
        <text>a (3S)-3-hydroxyacyl-CoA = a (2E)-enoyl-CoA + H2O</text>
        <dbReference type="Rhea" id="RHEA:16105"/>
        <dbReference type="ChEBI" id="CHEBI:15377"/>
        <dbReference type="ChEBI" id="CHEBI:57318"/>
        <dbReference type="ChEBI" id="CHEBI:58856"/>
        <dbReference type="EC" id="4.2.1.17"/>
    </reaction>
</comment>
<comment type="catalytic activity">
    <reaction evidence="1">
        <text>a 4-saturated-(3S)-3-hydroxyacyl-CoA = a (3E)-enoyl-CoA + H2O</text>
        <dbReference type="Rhea" id="RHEA:20724"/>
        <dbReference type="ChEBI" id="CHEBI:15377"/>
        <dbReference type="ChEBI" id="CHEBI:58521"/>
        <dbReference type="ChEBI" id="CHEBI:137480"/>
        <dbReference type="EC" id="4.2.1.17"/>
    </reaction>
</comment>
<comment type="catalytic activity">
    <reaction evidence="1">
        <text>a (3S)-3-hydroxyacyl-CoA + NAD(+) = a 3-oxoacyl-CoA + NADH + H(+)</text>
        <dbReference type="Rhea" id="RHEA:22432"/>
        <dbReference type="ChEBI" id="CHEBI:15378"/>
        <dbReference type="ChEBI" id="CHEBI:57318"/>
        <dbReference type="ChEBI" id="CHEBI:57540"/>
        <dbReference type="ChEBI" id="CHEBI:57945"/>
        <dbReference type="ChEBI" id="CHEBI:90726"/>
        <dbReference type="EC" id="1.1.1.35"/>
    </reaction>
</comment>
<comment type="catalytic activity">
    <reaction evidence="1">
        <text>(3S)-3-hydroxybutanoyl-CoA = (3R)-3-hydroxybutanoyl-CoA</text>
        <dbReference type="Rhea" id="RHEA:21760"/>
        <dbReference type="ChEBI" id="CHEBI:57315"/>
        <dbReference type="ChEBI" id="CHEBI:57316"/>
        <dbReference type="EC" id="5.1.2.3"/>
    </reaction>
</comment>
<comment type="pathway">
    <text evidence="1">Lipid metabolism; fatty acid beta-oxidation.</text>
</comment>
<comment type="subunit">
    <text evidence="1">Heterotetramer of two alpha chains (FadJ) and two beta chains (FadI).</text>
</comment>
<comment type="subcellular location">
    <subcellularLocation>
        <location evidence="1">Cytoplasm</location>
    </subcellularLocation>
</comment>
<comment type="similarity">
    <text evidence="1">In the N-terminal section; belongs to the enoyl-CoA hydratase/isomerase family.</text>
</comment>
<comment type="similarity">
    <text evidence="1">In the central section; belongs to the 3-hydroxyacyl-CoA dehydrogenase family.</text>
</comment>
<feature type="chain" id="PRO_0000109300" description="Fatty acid oxidation complex subunit alpha">
    <location>
        <begin position="1"/>
        <end position="714"/>
    </location>
</feature>
<feature type="region of interest" description="Enoyl-CoA hydratase" evidence="1">
    <location>
        <begin position="1"/>
        <end position="190"/>
    </location>
</feature>
<feature type="region of interest" description="3-hydroxyacyl-CoA dehydrogenase" evidence="1">
    <location>
        <begin position="306"/>
        <end position="714"/>
    </location>
</feature>
<feature type="site" description="Important for catalytic activity" evidence="1">
    <location>
        <position position="118"/>
    </location>
</feature>
<feature type="site" description="Important for catalytic activity" evidence="1">
    <location>
        <position position="140"/>
    </location>
</feature>
<reference key="1">
    <citation type="journal article" date="2004" name="J. Bacteriol.">
        <title>Analysis of the genome structure of the nonpathogenic probiotic Escherichia coli strain Nissle 1917.</title>
        <authorList>
            <person name="Grozdanov L."/>
            <person name="Raasch C."/>
            <person name="Schulze J."/>
            <person name="Sonnenborn U."/>
            <person name="Gottschalk G."/>
            <person name="Hacker J."/>
            <person name="Dobrindt U."/>
        </authorList>
    </citation>
    <scope>NUCLEOTIDE SEQUENCE [GENOMIC DNA]</scope>
    <source>
        <strain>O6:K5:H1 / Nissle 1917</strain>
    </source>
</reference>
<reference key="2">
    <citation type="journal article" date="2002" name="Proc. Natl. Acad. Sci. U.S.A.">
        <title>Extensive mosaic structure revealed by the complete genome sequence of uropathogenic Escherichia coli.</title>
        <authorList>
            <person name="Welch R.A."/>
            <person name="Burland V."/>
            <person name="Plunkett G. III"/>
            <person name="Redford P."/>
            <person name="Roesch P."/>
            <person name="Rasko D."/>
            <person name="Buckles E.L."/>
            <person name="Liou S.-R."/>
            <person name="Boutin A."/>
            <person name="Hackett J."/>
            <person name="Stroud D."/>
            <person name="Mayhew G.F."/>
            <person name="Rose D.J."/>
            <person name="Zhou S."/>
            <person name="Schwartz D.C."/>
            <person name="Perna N.T."/>
            <person name="Mobley H.L.T."/>
            <person name="Donnenberg M.S."/>
            <person name="Blattner F.R."/>
        </authorList>
    </citation>
    <scope>NUCLEOTIDE SEQUENCE [LARGE SCALE GENOMIC DNA]</scope>
    <source>
        <strain>CFT073 / ATCC 700928 / UPEC</strain>
    </source>
</reference>
<organism>
    <name type="scientific">Escherichia coli O6:H1 (strain CFT073 / ATCC 700928 / UPEC)</name>
    <dbReference type="NCBI Taxonomy" id="199310"/>
    <lineage>
        <taxon>Bacteria</taxon>
        <taxon>Pseudomonadati</taxon>
        <taxon>Pseudomonadota</taxon>
        <taxon>Gammaproteobacteria</taxon>
        <taxon>Enterobacterales</taxon>
        <taxon>Enterobacteriaceae</taxon>
        <taxon>Escherichia</taxon>
    </lineage>
</organism>
<keyword id="KW-0963">Cytoplasm</keyword>
<keyword id="KW-0276">Fatty acid metabolism</keyword>
<keyword id="KW-0413">Isomerase</keyword>
<keyword id="KW-0442">Lipid degradation</keyword>
<keyword id="KW-0443">Lipid metabolism</keyword>
<keyword id="KW-0456">Lyase</keyword>
<keyword id="KW-0511">Multifunctional enzyme</keyword>
<keyword id="KW-0520">NAD</keyword>
<keyword id="KW-0560">Oxidoreductase</keyword>
<keyword id="KW-1185">Reference proteome</keyword>
<name>FADJ_ECOL6</name>
<evidence type="ECO:0000255" key="1">
    <source>
        <dbReference type="HAMAP-Rule" id="MF_01617"/>
    </source>
</evidence>
<proteinExistence type="inferred from homology"/>